<reference key="1">
    <citation type="submission" date="2008-12" db="EMBL/GenBank/DDBJ databases">
        <title>Complete sequence of chromosome of Shewanella baltica OS223.</title>
        <authorList>
            <consortium name="US DOE Joint Genome Institute"/>
            <person name="Lucas S."/>
            <person name="Copeland A."/>
            <person name="Lapidus A."/>
            <person name="Glavina del Rio T."/>
            <person name="Dalin E."/>
            <person name="Tice H."/>
            <person name="Bruce D."/>
            <person name="Goodwin L."/>
            <person name="Pitluck S."/>
            <person name="Chertkov O."/>
            <person name="Meincke L."/>
            <person name="Brettin T."/>
            <person name="Detter J.C."/>
            <person name="Han C."/>
            <person name="Kuske C.R."/>
            <person name="Larimer F."/>
            <person name="Land M."/>
            <person name="Hauser L."/>
            <person name="Kyrpides N."/>
            <person name="Ovchinnikova G."/>
            <person name="Brettar I."/>
            <person name="Rodrigues J."/>
            <person name="Konstantinidis K."/>
            <person name="Tiedje J."/>
        </authorList>
    </citation>
    <scope>NUCLEOTIDE SEQUENCE [LARGE SCALE GENOMIC DNA]</scope>
    <source>
        <strain>OS223</strain>
    </source>
</reference>
<gene>
    <name evidence="1" type="primary">rpoZ</name>
    <name type="ordered locus">Sbal223_0362</name>
</gene>
<accession>B8E4F6</accession>
<sequence>MARVTVEDAVEQIGNRFDMILVAARRARQIAVQGKDPMVEEMNDKPTVIALREIELGLVNAHTLDADERQTVREREAAEIAAVSAIAEGRSL</sequence>
<organism>
    <name type="scientific">Shewanella baltica (strain OS223)</name>
    <dbReference type="NCBI Taxonomy" id="407976"/>
    <lineage>
        <taxon>Bacteria</taxon>
        <taxon>Pseudomonadati</taxon>
        <taxon>Pseudomonadota</taxon>
        <taxon>Gammaproteobacteria</taxon>
        <taxon>Alteromonadales</taxon>
        <taxon>Shewanellaceae</taxon>
        <taxon>Shewanella</taxon>
    </lineage>
</organism>
<proteinExistence type="inferred from homology"/>
<dbReference type="EC" id="2.7.7.6" evidence="1"/>
<dbReference type="EMBL" id="CP001252">
    <property type="protein sequence ID" value="ACK44897.1"/>
    <property type="molecule type" value="Genomic_DNA"/>
</dbReference>
<dbReference type="RefSeq" id="WP_006079841.1">
    <property type="nucleotide sequence ID" value="NC_011663.1"/>
</dbReference>
<dbReference type="SMR" id="B8E4F6"/>
<dbReference type="GeneID" id="11770701"/>
<dbReference type="KEGG" id="sbp:Sbal223_0362"/>
<dbReference type="HOGENOM" id="CLU_125406_5_3_6"/>
<dbReference type="Proteomes" id="UP000002507">
    <property type="component" value="Chromosome"/>
</dbReference>
<dbReference type="GO" id="GO:0000428">
    <property type="term" value="C:DNA-directed RNA polymerase complex"/>
    <property type="evidence" value="ECO:0007669"/>
    <property type="project" value="UniProtKB-KW"/>
</dbReference>
<dbReference type="GO" id="GO:0003677">
    <property type="term" value="F:DNA binding"/>
    <property type="evidence" value="ECO:0007669"/>
    <property type="project" value="UniProtKB-UniRule"/>
</dbReference>
<dbReference type="GO" id="GO:0003899">
    <property type="term" value="F:DNA-directed RNA polymerase activity"/>
    <property type="evidence" value="ECO:0007669"/>
    <property type="project" value="UniProtKB-UniRule"/>
</dbReference>
<dbReference type="GO" id="GO:0006351">
    <property type="term" value="P:DNA-templated transcription"/>
    <property type="evidence" value="ECO:0007669"/>
    <property type="project" value="UniProtKB-UniRule"/>
</dbReference>
<dbReference type="Gene3D" id="3.90.940.10">
    <property type="match status" value="1"/>
</dbReference>
<dbReference type="HAMAP" id="MF_00366">
    <property type="entry name" value="RNApol_bact_RpoZ"/>
    <property type="match status" value="1"/>
</dbReference>
<dbReference type="InterPro" id="IPR003716">
    <property type="entry name" value="DNA-dir_RNA_pol_omega"/>
</dbReference>
<dbReference type="InterPro" id="IPR006110">
    <property type="entry name" value="Pol_omega/Rpo6/RPB6"/>
</dbReference>
<dbReference type="InterPro" id="IPR036161">
    <property type="entry name" value="RPB6/omega-like_sf"/>
</dbReference>
<dbReference type="NCBIfam" id="TIGR00690">
    <property type="entry name" value="rpoZ"/>
    <property type="match status" value="1"/>
</dbReference>
<dbReference type="PANTHER" id="PTHR34476">
    <property type="entry name" value="DNA-DIRECTED RNA POLYMERASE SUBUNIT OMEGA"/>
    <property type="match status" value="1"/>
</dbReference>
<dbReference type="PANTHER" id="PTHR34476:SF1">
    <property type="entry name" value="DNA-DIRECTED RNA POLYMERASE SUBUNIT OMEGA"/>
    <property type="match status" value="1"/>
</dbReference>
<dbReference type="Pfam" id="PF01192">
    <property type="entry name" value="RNA_pol_Rpb6"/>
    <property type="match status" value="1"/>
</dbReference>
<dbReference type="SMART" id="SM01409">
    <property type="entry name" value="RNA_pol_Rpb6"/>
    <property type="match status" value="1"/>
</dbReference>
<dbReference type="SUPFAM" id="SSF63562">
    <property type="entry name" value="RPB6/omega subunit-like"/>
    <property type="match status" value="1"/>
</dbReference>
<keyword id="KW-0240">DNA-directed RNA polymerase</keyword>
<keyword id="KW-0548">Nucleotidyltransferase</keyword>
<keyword id="KW-0804">Transcription</keyword>
<keyword id="KW-0808">Transferase</keyword>
<name>RPOZ_SHEB2</name>
<feature type="chain" id="PRO_1000194810" description="DNA-directed RNA polymerase subunit omega">
    <location>
        <begin position="1"/>
        <end position="92"/>
    </location>
</feature>
<comment type="function">
    <text evidence="1">Promotes RNA polymerase assembly. Latches the N- and C-terminal regions of the beta' subunit thereby facilitating its interaction with the beta and alpha subunits.</text>
</comment>
<comment type="catalytic activity">
    <reaction evidence="1">
        <text>RNA(n) + a ribonucleoside 5'-triphosphate = RNA(n+1) + diphosphate</text>
        <dbReference type="Rhea" id="RHEA:21248"/>
        <dbReference type="Rhea" id="RHEA-COMP:14527"/>
        <dbReference type="Rhea" id="RHEA-COMP:17342"/>
        <dbReference type="ChEBI" id="CHEBI:33019"/>
        <dbReference type="ChEBI" id="CHEBI:61557"/>
        <dbReference type="ChEBI" id="CHEBI:140395"/>
        <dbReference type="EC" id="2.7.7.6"/>
    </reaction>
</comment>
<comment type="subunit">
    <text evidence="1">The RNAP catalytic core consists of 2 alpha, 1 beta, 1 beta' and 1 omega subunit. When a sigma factor is associated with the core the holoenzyme is formed, which can initiate transcription.</text>
</comment>
<comment type="similarity">
    <text evidence="1">Belongs to the RNA polymerase subunit omega family.</text>
</comment>
<evidence type="ECO:0000255" key="1">
    <source>
        <dbReference type="HAMAP-Rule" id="MF_00366"/>
    </source>
</evidence>
<protein>
    <recommendedName>
        <fullName evidence="1">DNA-directed RNA polymerase subunit omega</fullName>
        <shortName evidence="1">RNAP omega subunit</shortName>
        <ecNumber evidence="1">2.7.7.6</ecNumber>
    </recommendedName>
    <alternativeName>
        <fullName evidence="1">RNA polymerase omega subunit</fullName>
    </alternativeName>
    <alternativeName>
        <fullName evidence="1">Transcriptase subunit omega</fullName>
    </alternativeName>
</protein>